<organismHost>
    <name type="scientific">Escherichia coli</name>
    <dbReference type="NCBI Taxonomy" id="562"/>
</organismHost>
<accession>P07083</accession>
<feature type="chain" id="PRO_0000165104" description="Uncharacterized 9.8 kDa protein in Gp55-nrdG intergenic region">
    <location>
        <begin position="1"/>
        <end position="87"/>
    </location>
</feature>
<proteinExistence type="predicted"/>
<sequence length="87" mass="9845">MNEALINDLRLAGYEVNTNGIGLTQIEGNGFILEYEFSQWWLYANYGELIEYVDQFDSLDAALGAANLMKCLKLIHPLCFKIGLQIL</sequence>
<reference key="1">
    <citation type="journal article" date="1987" name="Nucleic Acids Res.">
        <title>Nucleotide sequence and primary structures of gene products coded for by the T4 genome between map positions 48.266 kb and 39.166 kb.</title>
        <authorList>
            <person name="Tomaschewski J."/>
            <person name="Rueger W."/>
        </authorList>
    </citation>
    <scope>NUCLEOTIDE SEQUENCE [GENOMIC DNA]</scope>
    <source>
        <strain>C</strain>
    </source>
</reference>
<reference key="2">
    <citation type="journal article" date="2003" name="Microbiol. Mol. Biol. Rev.">
        <title>Bacteriophage T4 genome.</title>
        <authorList>
            <person name="Miller E.S."/>
            <person name="Kutter E."/>
            <person name="Mosig G."/>
            <person name="Arisaka F."/>
            <person name="Kunisawa T."/>
            <person name="Ruger W."/>
        </authorList>
    </citation>
    <scope>NUCLEOTIDE SEQUENCE [LARGE SCALE GENOMIC DNA]</scope>
</reference>
<name>Y04A_BPT4</name>
<gene>
    <name type="primary">y04A</name>
    <name type="synonym">55.1</name>
</gene>
<keyword id="KW-1185">Reference proteome</keyword>
<protein>
    <recommendedName>
        <fullName>Uncharacterized 9.8 kDa protein in Gp55-nrdG intergenic region</fullName>
    </recommendedName>
</protein>
<dbReference type="EMBL" id="Y00122">
    <property type="protein sequence ID" value="CAA68320.1"/>
    <property type="molecule type" value="Genomic_DNA"/>
</dbReference>
<dbReference type="EMBL" id="AF158101">
    <property type="protein sequence ID" value="AAD42492.1"/>
    <property type="molecule type" value="Genomic_DNA"/>
</dbReference>
<dbReference type="PIR" id="F30292">
    <property type="entry name" value="ZGBPT9"/>
</dbReference>
<dbReference type="RefSeq" id="NP_049680.1">
    <property type="nucleotide sequence ID" value="NC_000866.4"/>
</dbReference>
<dbReference type="GeneID" id="1258698"/>
<dbReference type="KEGG" id="vg:1258698"/>
<dbReference type="OrthoDB" id="20982at10239"/>
<dbReference type="Proteomes" id="UP000009087">
    <property type="component" value="Segment"/>
</dbReference>
<dbReference type="InterPro" id="IPR020303">
    <property type="entry name" value="DUF5495"/>
</dbReference>
<dbReference type="Pfam" id="PF17599">
    <property type="entry name" value="DUF5495"/>
    <property type="match status" value="1"/>
</dbReference>
<organism>
    <name type="scientific">Enterobacteria phage T4</name>
    <name type="common">Bacteriophage T4</name>
    <dbReference type="NCBI Taxonomy" id="10665"/>
    <lineage>
        <taxon>Viruses</taxon>
        <taxon>Duplodnaviria</taxon>
        <taxon>Heunggongvirae</taxon>
        <taxon>Uroviricota</taxon>
        <taxon>Caudoviricetes</taxon>
        <taxon>Straboviridae</taxon>
        <taxon>Tevenvirinae</taxon>
        <taxon>Tequatrovirus</taxon>
    </lineage>
</organism>